<keyword id="KW-0028">Amino-acid biosynthesis</keyword>
<keyword id="KW-0057">Aromatic amino acid biosynthesis</keyword>
<keyword id="KW-0274">FAD</keyword>
<keyword id="KW-0285">Flavoprotein</keyword>
<keyword id="KW-0288">FMN</keyword>
<keyword id="KW-0456">Lyase</keyword>
<keyword id="KW-0521">NADP</keyword>
<evidence type="ECO:0000255" key="1">
    <source>
        <dbReference type="HAMAP-Rule" id="MF_00300"/>
    </source>
</evidence>
<evidence type="ECO:0000256" key="2">
    <source>
        <dbReference type="SAM" id="MobiDB-lite"/>
    </source>
</evidence>
<accession>B0UJB1</accession>
<proteinExistence type="inferred from homology"/>
<protein>
    <recommendedName>
        <fullName evidence="1">Chorismate synthase</fullName>
        <shortName evidence="1">CS</shortName>
        <ecNumber evidence="1">4.2.3.5</ecNumber>
    </recommendedName>
    <alternativeName>
        <fullName evidence="1">5-enolpyruvylshikimate-3-phosphate phospholyase</fullName>
    </alternativeName>
</protein>
<feature type="chain" id="PRO_1000115372" description="Chorismate synthase">
    <location>
        <begin position="1"/>
        <end position="390"/>
    </location>
</feature>
<feature type="region of interest" description="Disordered" evidence="2">
    <location>
        <begin position="362"/>
        <end position="390"/>
    </location>
</feature>
<feature type="compositionally biased region" description="Low complexity" evidence="2">
    <location>
        <begin position="363"/>
        <end position="379"/>
    </location>
</feature>
<feature type="compositionally biased region" description="Gly residues" evidence="2">
    <location>
        <begin position="380"/>
        <end position="390"/>
    </location>
</feature>
<feature type="binding site" evidence="1">
    <location>
        <position position="48"/>
    </location>
    <ligand>
        <name>NADP(+)</name>
        <dbReference type="ChEBI" id="CHEBI:58349"/>
    </ligand>
</feature>
<feature type="binding site" evidence="1">
    <location>
        <position position="54"/>
    </location>
    <ligand>
        <name>NADP(+)</name>
        <dbReference type="ChEBI" id="CHEBI:58349"/>
    </ligand>
</feature>
<feature type="binding site" evidence="1">
    <location>
        <begin position="132"/>
        <end position="134"/>
    </location>
    <ligand>
        <name>FMN</name>
        <dbReference type="ChEBI" id="CHEBI:58210"/>
    </ligand>
</feature>
<feature type="binding site" evidence="1">
    <location>
        <begin position="244"/>
        <end position="245"/>
    </location>
    <ligand>
        <name>FMN</name>
        <dbReference type="ChEBI" id="CHEBI:58210"/>
    </ligand>
</feature>
<feature type="binding site" evidence="1">
    <location>
        <position position="289"/>
    </location>
    <ligand>
        <name>FMN</name>
        <dbReference type="ChEBI" id="CHEBI:58210"/>
    </ligand>
</feature>
<feature type="binding site" evidence="1">
    <location>
        <begin position="304"/>
        <end position="308"/>
    </location>
    <ligand>
        <name>FMN</name>
        <dbReference type="ChEBI" id="CHEBI:58210"/>
    </ligand>
</feature>
<feature type="binding site" evidence="1">
    <location>
        <position position="330"/>
    </location>
    <ligand>
        <name>FMN</name>
        <dbReference type="ChEBI" id="CHEBI:58210"/>
    </ligand>
</feature>
<sequence length="390" mass="40779">MSHNSFGHLFRVTTFGESHGPALGCVVDGCPPLIPLDAAEIQAELDRRRPGQSRFTTQRREPDAVRILSGVFADDRTGGRQLTTGTPIALMIENVDQRSKDYSDIRDTYRPGHADYTYEAKYGIRDYRGGGRSSARETAARVAAGAIARKVLPGVTIRGALVQMGPHAIDRARFDWAEVGNNPFFCPDAEAAARWAEVLDGVRKDGSSLGAVIEVVAEGVPPGLGAPVYGKLDADLAAAMMSINAVKGVEIGDGFAAAALRGEENADEMRPGHGGAPSFLANHAGGILGGISTGQAVVCRFAVKPTSSILTPRASVTRDNRPTDVLTRGRHDPCVGIRAVPVGEAMMACVLADHVLRHRGQVGAHPAGAHPAGADPAGTHPGGPGGFQPG</sequence>
<dbReference type="EC" id="4.2.3.5" evidence="1"/>
<dbReference type="EMBL" id="CP000943">
    <property type="protein sequence ID" value="ACA14961.1"/>
    <property type="molecule type" value="Genomic_DNA"/>
</dbReference>
<dbReference type="RefSeq" id="WP_012330378.1">
    <property type="nucleotide sequence ID" value="NC_010511.1"/>
</dbReference>
<dbReference type="SMR" id="B0UJB1"/>
<dbReference type="STRING" id="426117.M446_0392"/>
<dbReference type="KEGG" id="met:M446_0392"/>
<dbReference type="eggNOG" id="COG0082">
    <property type="taxonomic scope" value="Bacteria"/>
</dbReference>
<dbReference type="HOGENOM" id="CLU_034547_0_0_5"/>
<dbReference type="UniPathway" id="UPA00053">
    <property type="reaction ID" value="UER00090"/>
</dbReference>
<dbReference type="GO" id="GO:0005829">
    <property type="term" value="C:cytosol"/>
    <property type="evidence" value="ECO:0007669"/>
    <property type="project" value="TreeGrafter"/>
</dbReference>
<dbReference type="GO" id="GO:0004107">
    <property type="term" value="F:chorismate synthase activity"/>
    <property type="evidence" value="ECO:0007669"/>
    <property type="project" value="UniProtKB-UniRule"/>
</dbReference>
<dbReference type="GO" id="GO:0010181">
    <property type="term" value="F:FMN binding"/>
    <property type="evidence" value="ECO:0007669"/>
    <property type="project" value="TreeGrafter"/>
</dbReference>
<dbReference type="GO" id="GO:0008652">
    <property type="term" value="P:amino acid biosynthetic process"/>
    <property type="evidence" value="ECO:0007669"/>
    <property type="project" value="UniProtKB-KW"/>
</dbReference>
<dbReference type="GO" id="GO:0009073">
    <property type="term" value="P:aromatic amino acid family biosynthetic process"/>
    <property type="evidence" value="ECO:0007669"/>
    <property type="project" value="UniProtKB-KW"/>
</dbReference>
<dbReference type="GO" id="GO:0009423">
    <property type="term" value="P:chorismate biosynthetic process"/>
    <property type="evidence" value="ECO:0007669"/>
    <property type="project" value="UniProtKB-UniRule"/>
</dbReference>
<dbReference type="CDD" id="cd07304">
    <property type="entry name" value="Chorismate_synthase"/>
    <property type="match status" value="1"/>
</dbReference>
<dbReference type="Gene3D" id="3.60.150.10">
    <property type="entry name" value="Chorismate synthase AroC"/>
    <property type="match status" value="1"/>
</dbReference>
<dbReference type="HAMAP" id="MF_00300">
    <property type="entry name" value="Chorismate_synth"/>
    <property type="match status" value="1"/>
</dbReference>
<dbReference type="InterPro" id="IPR000453">
    <property type="entry name" value="Chorismate_synth"/>
</dbReference>
<dbReference type="InterPro" id="IPR035904">
    <property type="entry name" value="Chorismate_synth_AroC_sf"/>
</dbReference>
<dbReference type="InterPro" id="IPR020541">
    <property type="entry name" value="Chorismate_synthase_CS"/>
</dbReference>
<dbReference type="NCBIfam" id="TIGR00033">
    <property type="entry name" value="aroC"/>
    <property type="match status" value="1"/>
</dbReference>
<dbReference type="NCBIfam" id="NF003793">
    <property type="entry name" value="PRK05382.1"/>
    <property type="match status" value="1"/>
</dbReference>
<dbReference type="PANTHER" id="PTHR21085">
    <property type="entry name" value="CHORISMATE SYNTHASE"/>
    <property type="match status" value="1"/>
</dbReference>
<dbReference type="PANTHER" id="PTHR21085:SF0">
    <property type="entry name" value="CHORISMATE SYNTHASE"/>
    <property type="match status" value="1"/>
</dbReference>
<dbReference type="Pfam" id="PF01264">
    <property type="entry name" value="Chorismate_synt"/>
    <property type="match status" value="1"/>
</dbReference>
<dbReference type="PIRSF" id="PIRSF001456">
    <property type="entry name" value="Chorismate_synth"/>
    <property type="match status" value="1"/>
</dbReference>
<dbReference type="SUPFAM" id="SSF103263">
    <property type="entry name" value="Chorismate synthase, AroC"/>
    <property type="match status" value="1"/>
</dbReference>
<dbReference type="PROSITE" id="PS00787">
    <property type="entry name" value="CHORISMATE_SYNTHASE_1"/>
    <property type="match status" value="1"/>
</dbReference>
<dbReference type="PROSITE" id="PS00788">
    <property type="entry name" value="CHORISMATE_SYNTHASE_2"/>
    <property type="match status" value="1"/>
</dbReference>
<dbReference type="PROSITE" id="PS00789">
    <property type="entry name" value="CHORISMATE_SYNTHASE_3"/>
    <property type="match status" value="1"/>
</dbReference>
<reference key="1">
    <citation type="submission" date="2008-02" db="EMBL/GenBank/DDBJ databases">
        <title>Complete sequence of chromosome of Methylobacterium sp. 4-46.</title>
        <authorList>
            <consortium name="US DOE Joint Genome Institute"/>
            <person name="Copeland A."/>
            <person name="Lucas S."/>
            <person name="Lapidus A."/>
            <person name="Glavina del Rio T."/>
            <person name="Dalin E."/>
            <person name="Tice H."/>
            <person name="Bruce D."/>
            <person name="Goodwin L."/>
            <person name="Pitluck S."/>
            <person name="Chertkov O."/>
            <person name="Brettin T."/>
            <person name="Detter J.C."/>
            <person name="Han C."/>
            <person name="Kuske C.R."/>
            <person name="Schmutz J."/>
            <person name="Larimer F."/>
            <person name="Land M."/>
            <person name="Hauser L."/>
            <person name="Kyrpides N."/>
            <person name="Ivanova N."/>
            <person name="Marx C.J."/>
            <person name="Richardson P."/>
        </authorList>
    </citation>
    <scope>NUCLEOTIDE SEQUENCE [LARGE SCALE GENOMIC DNA]</scope>
    <source>
        <strain>4-46</strain>
    </source>
</reference>
<name>AROC_METS4</name>
<comment type="function">
    <text evidence="1">Catalyzes the anti-1,4-elimination of the C-3 phosphate and the C-6 proR hydrogen from 5-enolpyruvylshikimate-3-phosphate (EPSP) to yield chorismate, which is the branch point compound that serves as the starting substrate for the three terminal pathways of aromatic amino acid biosynthesis. This reaction introduces a second double bond into the aromatic ring system.</text>
</comment>
<comment type="catalytic activity">
    <reaction evidence="1">
        <text>5-O-(1-carboxyvinyl)-3-phosphoshikimate = chorismate + phosphate</text>
        <dbReference type="Rhea" id="RHEA:21020"/>
        <dbReference type="ChEBI" id="CHEBI:29748"/>
        <dbReference type="ChEBI" id="CHEBI:43474"/>
        <dbReference type="ChEBI" id="CHEBI:57701"/>
        <dbReference type="EC" id="4.2.3.5"/>
    </reaction>
</comment>
<comment type="cofactor">
    <cofactor evidence="1">
        <name>FMNH2</name>
        <dbReference type="ChEBI" id="CHEBI:57618"/>
    </cofactor>
    <text evidence="1">Reduced FMN (FMNH(2)).</text>
</comment>
<comment type="pathway">
    <text evidence="1">Metabolic intermediate biosynthesis; chorismate biosynthesis; chorismate from D-erythrose 4-phosphate and phosphoenolpyruvate: step 7/7.</text>
</comment>
<comment type="subunit">
    <text evidence="1">Homotetramer.</text>
</comment>
<comment type="similarity">
    <text evidence="1">Belongs to the chorismate synthase family.</text>
</comment>
<organism>
    <name type="scientific">Methylobacterium sp. (strain 4-46)</name>
    <dbReference type="NCBI Taxonomy" id="426117"/>
    <lineage>
        <taxon>Bacteria</taxon>
        <taxon>Pseudomonadati</taxon>
        <taxon>Pseudomonadota</taxon>
        <taxon>Alphaproteobacteria</taxon>
        <taxon>Hyphomicrobiales</taxon>
        <taxon>Methylobacteriaceae</taxon>
        <taxon>Methylobacterium</taxon>
    </lineage>
</organism>
<gene>
    <name evidence="1" type="primary">aroC</name>
    <name type="ordered locus">M446_0392</name>
</gene>